<reference key="1">
    <citation type="journal article" date="2004" name="Nat. Genet.">
        <title>Complete sequencing and characterization of 21,243 full-length human cDNAs.</title>
        <authorList>
            <person name="Ota T."/>
            <person name="Suzuki Y."/>
            <person name="Nishikawa T."/>
            <person name="Otsuki T."/>
            <person name="Sugiyama T."/>
            <person name="Irie R."/>
            <person name="Wakamatsu A."/>
            <person name="Hayashi K."/>
            <person name="Sato H."/>
            <person name="Nagai K."/>
            <person name="Kimura K."/>
            <person name="Makita H."/>
            <person name="Sekine M."/>
            <person name="Obayashi M."/>
            <person name="Nishi T."/>
            <person name="Shibahara T."/>
            <person name="Tanaka T."/>
            <person name="Ishii S."/>
            <person name="Yamamoto J."/>
            <person name="Saito K."/>
            <person name="Kawai Y."/>
            <person name="Isono Y."/>
            <person name="Nakamura Y."/>
            <person name="Nagahari K."/>
            <person name="Murakami K."/>
            <person name="Yasuda T."/>
            <person name="Iwayanagi T."/>
            <person name="Wagatsuma M."/>
            <person name="Shiratori A."/>
            <person name="Sudo H."/>
            <person name="Hosoiri T."/>
            <person name="Kaku Y."/>
            <person name="Kodaira H."/>
            <person name="Kondo H."/>
            <person name="Sugawara M."/>
            <person name="Takahashi M."/>
            <person name="Kanda K."/>
            <person name="Yokoi T."/>
            <person name="Furuya T."/>
            <person name="Kikkawa E."/>
            <person name="Omura Y."/>
            <person name="Abe K."/>
            <person name="Kamihara K."/>
            <person name="Katsuta N."/>
            <person name="Sato K."/>
            <person name="Tanikawa M."/>
            <person name="Yamazaki M."/>
            <person name="Ninomiya K."/>
            <person name="Ishibashi T."/>
            <person name="Yamashita H."/>
            <person name="Murakawa K."/>
            <person name="Fujimori K."/>
            <person name="Tanai H."/>
            <person name="Kimata M."/>
            <person name="Watanabe M."/>
            <person name="Hiraoka S."/>
            <person name="Chiba Y."/>
            <person name="Ishida S."/>
            <person name="Ono Y."/>
            <person name="Takiguchi S."/>
            <person name="Watanabe S."/>
            <person name="Yosida M."/>
            <person name="Hotuta T."/>
            <person name="Kusano J."/>
            <person name="Kanehori K."/>
            <person name="Takahashi-Fujii A."/>
            <person name="Hara H."/>
            <person name="Tanase T.-O."/>
            <person name="Nomura Y."/>
            <person name="Togiya S."/>
            <person name="Komai F."/>
            <person name="Hara R."/>
            <person name="Takeuchi K."/>
            <person name="Arita M."/>
            <person name="Imose N."/>
            <person name="Musashino K."/>
            <person name="Yuuki H."/>
            <person name="Oshima A."/>
            <person name="Sasaki N."/>
            <person name="Aotsuka S."/>
            <person name="Yoshikawa Y."/>
            <person name="Matsunawa H."/>
            <person name="Ichihara T."/>
            <person name="Shiohata N."/>
            <person name="Sano S."/>
            <person name="Moriya S."/>
            <person name="Momiyama H."/>
            <person name="Satoh N."/>
            <person name="Takami S."/>
            <person name="Terashima Y."/>
            <person name="Suzuki O."/>
            <person name="Nakagawa S."/>
            <person name="Senoh A."/>
            <person name="Mizoguchi H."/>
            <person name="Goto Y."/>
            <person name="Shimizu F."/>
            <person name="Wakebe H."/>
            <person name="Hishigaki H."/>
            <person name="Watanabe T."/>
            <person name="Sugiyama A."/>
            <person name="Takemoto M."/>
            <person name="Kawakami B."/>
            <person name="Yamazaki M."/>
            <person name="Watanabe K."/>
            <person name="Kumagai A."/>
            <person name="Itakura S."/>
            <person name="Fukuzumi Y."/>
            <person name="Fujimori Y."/>
            <person name="Komiyama M."/>
            <person name="Tashiro H."/>
            <person name="Tanigami A."/>
            <person name="Fujiwara T."/>
            <person name="Ono T."/>
            <person name="Yamada K."/>
            <person name="Fujii Y."/>
            <person name="Ozaki K."/>
            <person name="Hirao M."/>
            <person name="Ohmori Y."/>
            <person name="Kawabata A."/>
            <person name="Hikiji T."/>
            <person name="Kobatake N."/>
            <person name="Inagaki H."/>
            <person name="Ikema Y."/>
            <person name="Okamoto S."/>
            <person name="Okitani R."/>
            <person name="Kawakami T."/>
            <person name="Noguchi S."/>
            <person name="Itoh T."/>
            <person name="Shigeta K."/>
            <person name="Senba T."/>
            <person name="Matsumura K."/>
            <person name="Nakajima Y."/>
            <person name="Mizuno T."/>
            <person name="Morinaga M."/>
            <person name="Sasaki M."/>
            <person name="Togashi T."/>
            <person name="Oyama M."/>
            <person name="Hata H."/>
            <person name="Watanabe M."/>
            <person name="Komatsu T."/>
            <person name="Mizushima-Sugano J."/>
            <person name="Satoh T."/>
            <person name="Shirai Y."/>
            <person name="Takahashi Y."/>
            <person name="Nakagawa K."/>
            <person name="Okumura K."/>
            <person name="Nagase T."/>
            <person name="Nomura N."/>
            <person name="Kikuchi H."/>
            <person name="Masuho Y."/>
            <person name="Yamashita R."/>
            <person name="Nakai K."/>
            <person name="Yada T."/>
            <person name="Nakamura Y."/>
            <person name="Ohara O."/>
            <person name="Isogai T."/>
            <person name="Sugano S."/>
        </authorList>
    </citation>
    <scope>NUCLEOTIDE SEQUENCE [LARGE SCALE MRNA] (ISOFORM 1)</scope>
    <source>
        <tissue>Cerebellum</tissue>
    </source>
</reference>
<reference key="2">
    <citation type="journal article" date="2006" name="Nature">
        <title>The DNA sequence, annotation and analysis of human chromosome 3.</title>
        <authorList>
            <person name="Muzny D.M."/>
            <person name="Scherer S.E."/>
            <person name="Kaul R."/>
            <person name="Wang J."/>
            <person name="Yu J."/>
            <person name="Sudbrak R."/>
            <person name="Buhay C.J."/>
            <person name="Chen R."/>
            <person name="Cree A."/>
            <person name="Ding Y."/>
            <person name="Dugan-Rocha S."/>
            <person name="Gill R."/>
            <person name="Gunaratne P."/>
            <person name="Harris R.A."/>
            <person name="Hawes A.C."/>
            <person name="Hernandez J."/>
            <person name="Hodgson A.V."/>
            <person name="Hume J."/>
            <person name="Jackson A."/>
            <person name="Khan Z.M."/>
            <person name="Kovar-Smith C."/>
            <person name="Lewis L.R."/>
            <person name="Lozado R.J."/>
            <person name="Metzker M.L."/>
            <person name="Milosavljevic A."/>
            <person name="Miner G.R."/>
            <person name="Morgan M.B."/>
            <person name="Nazareth L.V."/>
            <person name="Scott G."/>
            <person name="Sodergren E."/>
            <person name="Song X.-Z."/>
            <person name="Steffen D."/>
            <person name="Wei S."/>
            <person name="Wheeler D.A."/>
            <person name="Wright M.W."/>
            <person name="Worley K.C."/>
            <person name="Yuan Y."/>
            <person name="Zhang Z."/>
            <person name="Adams C.Q."/>
            <person name="Ansari-Lari M.A."/>
            <person name="Ayele M."/>
            <person name="Brown M.J."/>
            <person name="Chen G."/>
            <person name="Chen Z."/>
            <person name="Clendenning J."/>
            <person name="Clerc-Blankenburg K.P."/>
            <person name="Chen R."/>
            <person name="Chen Z."/>
            <person name="Davis C."/>
            <person name="Delgado O."/>
            <person name="Dinh H.H."/>
            <person name="Dong W."/>
            <person name="Draper H."/>
            <person name="Ernst S."/>
            <person name="Fu G."/>
            <person name="Gonzalez-Garay M.L."/>
            <person name="Garcia D.K."/>
            <person name="Gillett W."/>
            <person name="Gu J."/>
            <person name="Hao B."/>
            <person name="Haugen E."/>
            <person name="Havlak P."/>
            <person name="He X."/>
            <person name="Hennig S."/>
            <person name="Hu S."/>
            <person name="Huang W."/>
            <person name="Jackson L.R."/>
            <person name="Jacob L.S."/>
            <person name="Kelly S.H."/>
            <person name="Kube M."/>
            <person name="Levy R."/>
            <person name="Li Z."/>
            <person name="Liu B."/>
            <person name="Liu J."/>
            <person name="Liu W."/>
            <person name="Lu J."/>
            <person name="Maheshwari M."/>
            <person name="Nguyen B.-V."/>
            <person name="Okwuonu G.O."/>
            <person name="Palmeiri A."/>
            <person name="Pasternak S."/>
            <person name="Perez L.M."/>
            <person name="Phelps K.A."/>
            <person name="Plopper F.J."/>
            <person name="Qiang B."/>
            <person name="Raymond C."/>
            <person name="Rodriguez R."/>
            <person name="Saenphimmachak C."/>
            <person name="Santibanez J."/>
            <person name="Shen H."/>
            <person name="Shen Y."/>
            <person name="Subramanian S."/>
            <person name="Tabor P.E."/>
            <person name="Verduzco D."/>
            <person name="Waldron L."/>
            <person name="Wang J."/>
            <person name="Wang J."/>
            <person name="Wang Q."/>
            <person name="Williams G.A."/>
            <person name="Wong G.K.-S."/>
            <person name="Yao Z."/>
            <person name="Zhang J."/>
            <person name="Zhang X."/>
            <person name="Zhao G."/>
            <person name="Zhou J."/>
            <person name="Zhou Y."/>
            <person name="Nelson D."/>
            <person name="Lehrach H."/>
            <person name="Reinhardt R."/>
            <person name="Naylor S.L."/>
            <person name="Yang H."/>
            <person name="Olson M."/>
            <person name="Weinstock G."/>
            <person name="Gibbs R.A."/>
        </authorList>
    </citation>
    <scope>NUCLEOTIDE SEQUENCE [LARGE SCALE GENOMIC DNA]</scope>
</reference>
<reference key="3">
    <citation type="submission" date="2005-09" db="EMBL/GenBank/DDBJ databases">
        <authorList>
            <person name="Mural R.J."/>
            <person name="Istrail S."/>
            <person name="Sutton G."/>
            <person name="Florea L."/>
            <person name="Halpern A.L."/>
            <person name="Mobarry C.M."/>
            <person name="Lippert R."/>
            <person name="Walenz B."/>
            <person name="Shatkay H."/>
            <person name="Dew I."/>
            <person name="Miller J.R."/>
            <person name="Flanigan M.J."/>
            <person name="Edwards N.J."/>
            <person name="Bolanos R."/>
            <person name="Fasulo D."/>
            <person name="Halldorsson B.V."/>
            <person name="Hannenhalli S."/>
            <person name="Turner R."/>
            <person name="Yooseph S."/>
            <person name="Lu F."/>
            <person name="Nusskern D.R."/>
            <person name="Shue B.C."/>
            <person name="Zheng X.H."/>
            <person name="Zhong F."/>
            <person name="Delcher A.L."/>
            <person name="Huson D.H."/>
            <person name="Kravitz S.A."/>
            <person name="Mouchard L."/>
            <person name="Reinert K."/>
            <person name="Remington K.A."/>
            <person name="Clark A.G."/>
            <person name="Waterman M.S."/>
            <person name="Eichler E.E."/>
            <person name="Adams M.D."/>
            <person name="Hunkapiller M.W."/>
            <person name="Myers E.W."/>
            <person name="Venter J.C."/>
        </authorList>
    </citation>
    <scope>NUCLEOTIDE SEQUENCE [LARGE SCALE GENOMIC DNA]</scope>
</reference>
<reference key="4">
    <citation type="journal article" date="2004" name="Genome Res.">
        <title>The status, quality, and expansion of the NIH full-length cDNA project: the Mammalian Gene Collection (MGC).</title>
        <authorList>
            <consortium name="The MGC Project Team"/>
        </authorList>
    </citation>
    <scope>NUCLEOTIDE SEQUENCE [LARGE SCALE MRNA] OF 9-464 (ISOFORM 2)</scope>
    <source>
        <tissue>Testis</tissue>
    </source>
</reference>
<name>LRC34_HUMAN</name>
<evidence type="ECO:0000250" key="1">
    <source>
        <dbReference type="UniProtKB" id="Q9DAM1"/>
    </source>
</evidence>
<evidence type="ECO:0000256" key="2">
    <source>
        <dbReference type="SAM" id="MobiDB-lite"/>
    </source>
</evidence>
<evidence type="ECO:0000303" key="3">
    <source>
    </source>
</evidence>
<evidence type="ECO:0000305" key="4"/>
<accession>Q8IZ02</accession>
<accession>B4DEJ7</accession>
<accession>E9PBH2</accession>
<accession>G5E9T7</accession>
<keyword id="KW-0002">3D-structure</keyword>
<keyword id="KW-0025">Alternative splicing</keyword>
<keyword id="KW-0963">Cytoplasm</keyword>
<keyword id="KW-0221">Differentiation</keyword>
<keyword id="KW-0433">Leucine-rich repeat</keyword>
<keyword id="KW-0539">Nucleus</keyword>
<keyword id="KW-1267">Proteomics identification</keyword>
<keyword id="KW-1185">Reference proteome</keyword>
<keyword id="KW-0677">Repeat</keyword>
<organism>
    <name type="scientific">Homo sapiens</name>
    <name type="common">Human</name>
    <dbReference type="NCBI Taxonomy" id="9606"/>
    <lineage>
        <taxon>Eukaryota</taxon>
        <taxon>Metazoa</taxon>
        <taxon>Chordata</taxon>
        <taxon>Craniata</taxon>
        <taxon>Vertebrata</taxon>
        <taxon>Euteleostomi</taxon>
        <taxon>Mammalia</taxon>
        <taxon>Eutheria</taxon>
        <taxon>Euarchontoglires</taxon>
        <taxon>Primates</taxon>
        <taxon>Haplorrhini</taxon>
        <taxon>Catarrhini</taxon>
        <taxon>Hominidae</taxon>
        <taxon>Homo</taxon>
    </lineage>
</organism>
<dbReference type="EMBL" id="AK293661">
    <property type="protein sequence ID" value="BAG57108.1"/>
    <property type="molecule type" value="mRNA"/>
</dbReference>
<dbReference type="EMBL" id="AC078795">
    <property type="status" value="NOT_ANNOTATED_CDS"/>
    <property type="molecule type" value="Genomic_DNA"/>
</dbReference>
<dbReference type="EMBL" id="CH471052">
    <property type="protein sequence ID" value="EAW78539.1"/>
    <property type="molecule type" value="Genomic_DNA"/>
</dbReference>
<dbReference type="EMBL" id="BC032841">
    <property type="protein sequence ID" value="AAH32841.1"/>
    <property type="status" value="ALT_INIT"/>
    <property type="molecule type" value="mRNA"/>
</dbReference>
<dbReference type="CCDS" id="CCDS3208.2">
    <molecule id="Q8IZ02-3"/>
</dbReference>
<dbReference type="CCDS" id="CCDS54672.1">
    <molecule id="Q8IZ02-2"/>
</dbReference>
<dbReference type="RefSeq" id="NP_001166250.1">
    <molecule id="Q8IZ02-2"/>
    <property type="nucleotide sequence ID" value="NM_001172779.2"/>
</dbReference>
<dbReference type="RefSeq" id="NP_699184.2">
    <molecule id="Q8IZ02-3"/>
    <property type="nucleotide sequence ID" value="NM_153353.5"/>
</dbReference>
<dbReference type="PDB" id="8J07">
    <property type="method" value="EM"/>
    <property type="resolution" value="4.10 A"/>
    <property type="chains" value="w=1-464"/>
</dbReference>
<dbReference type="PDBsum" id="8J07"/>
<dbReference type="EMDB" id="EMD-35888"/>
<dbReference type="SMR" id="Q8IZ02"/>
<dbReference type="BioGRID" id="127404">
    <property type="interactions" value="2"/>
</dbReference>
<dbReference type="FunCoup" id="Q8IZ02">
    <property type="interactions" value="10"/>
</dbReference>
<dbReference type="IntAct" id="Q8IZ02">
    <property type="interactions" value="2"/>
</dbReference>
<dbReference type="STRING" id="9606.ENSP00000414635"/>
<dbReference type="GlyGen" id="Q8IZ02">
    <property type="glycosylation" value="1 site"/>
</dbReference>
<dbReference type="iPTMnet" id="Q8IZ02"/>
<dbReference type="PhosphoSitePlus" id="Q8IZ02"/>
<dbReference type="BioMuta" id="LRRC34"/>
<dbReference type="DMDM" id="296434572"/>
<dbReference type="jPOST" id="Q8IZ02"/>
<dbReference type="MassIVE" id="Q8IZ02"/>
<dbReference type="PaxDb" id="9606-ENSP00000414635"/>
<dbReference type="PeptideAtlas" id="Q8IZ02"/>
<dbReference type="ProteomicsDB" id="19222"/>
<dbReference type="ProteomicsDB" id="34037"/>
<dbReference type="Antibodypedia" id="50951">
    <property type="antibodies" value="75 antibodies from 18 providers"/>
</dbReference>
<dbReference type="DNASU" id="151827"/>
<dbReference type="Ensembl" id="ENST00000446859.7">
    <molecule id="Q8IZ02-2"/>
    <property type="protein sequence ID" value="ENSP00000414635.1"/>
    <property type="gene ID" value="ENSG00000171757.17"/>
</dbReference>
<dbReference type="Ensembl" id="ENST00000522526.6">
    <molecule id="Q8IZ02-3"/>
    <property type="protein sequence ID" value="ENSP00000429278.2"/>
    <property type="gene ID" value="ENSG00000171757.17"/>
</dbReference>
<dbReference type="GeneID" id="151827"/>
<dbReference type="KEGG" id="hsa:151827"/>
<dbReference type="MANE-Select" id="ENST00000446859.7">
    <property type="protein sequence ID" value="ENSP00000414635.1"/>
    <property type="RefSeq nucleotide sequence ID" value="NM_001172779.2"/>
    <property type="RefSeq protein sequence ID" value="NP_001166250.1"/>
</dbReference>
<dbReference type="UCSC" id="uc003ffx.4">
    <molecule id="Q8IZ02-2"/>
    <property type="organism name" value="human"/>
</dbReference>
<dbReference type="AGR" id="HGNC:28408"/>
<dbReference type="CTD" id="151827"/>
<dbReference type="DisGeNET" id="151827"/>
<dbReference type="GeneCards" id="LRRC34"/>
<dbReference type="HGNC" id="HGNC:28408">
    <property type="gene designation" value="LRRC34"/>
</dbReference>
<dbReference type="HPA" id="ENSG00000171757">
    <property type="expression patterns" value="Tissue enhanced (testis)"/>
</dbReference>
<dbReference type="MIM" id="619037">
    <property type="type" value="gene"/>
</dbReference>
<dbReference type="neXtProt" id="NX_Q8IZ02"/>
<dbReference type="OpenTargets" id="ENSG00000171757"/>
<dbReference type="PharmGKB" id="PA142671522"/>
<dbReference type="VEuPathDB" id="HostDB:ENSG00000171757"/>
<dbReference type="eggNOG" id="KOG4308">
    <property type="taxonomic scope" value="Eukaryota"/>
</dbReference>
<dbReference type="GeneTree" id="ENSGT00940000156456"/>
<dbReference type="InParanoid" id="Q8IZ02"/>
<dbReference type="OMA" id="IKNCGMK"/>
<dbReference type="OrthoDB" id="272549at2759"/>
<dbReference type="PAN-GO" id="Q8IZ02">
    <property type="GO annotations" value="0 GO annotations based on evolutionary models"/>
</dbReference>
<dbReference type="PhylomeDB" id="Q8IZ02"/>
<dbReference type="TreeFam" id="TF329653"/>
<dbReference type="PathwayCommons" id="Q8IZ02"/>
<dbReference type="SignaLink" id="Q8IZ02"/>
<dbReference type="BioGRID-ORCS" id="151827">
    <property type="hits" value="8 hits in 1156 CRISPR screens"/>
</dbReference>
<dbReference type="GenomeRNAi" id="151827"/>
<dbReference type="Pharos" id="Q8IZ02">
    <property type="development level" value="Tbio"/>
</dbReference>
<dbReference type="PRO" id="PR:Q8IZ02"/>
<dbReference type="Proteomes" id="UP000005640">
    <property type="component" value="Chromosome 3"/>
</dbReference>
<dbReference type="RNAct" id="Q8IZ02">
    <property type="molecule type" value="protein"/>
</dbReference>
<dbReference type="Bgee" id="ENSG00000171757">
    <property type="expression patterns" value="Expressed in bronchial epithelial cell and 129 other cell types or tissues"/>
</dbReference>
<dbReference type="ExpressionAtlas" id="Q8IZ02">
    <property type="expression patterns" value="baseline and differential"/>
</dbReference>
<dbReference type="GO" id="GO:0005737">
    <property type="term" value="C:cytoplasm"/>
    <property type="evidence" value="ECO:0007669"/>
    <property type="project" value="UniProtKB-SubCell"/>
</dbReference>
<dbReference type="GO" id="GO:0005730">
    <property type="term" value="C:nucleolus"/>
    <property type="evidence" value="ECO:0007669"/>
    <property type="project" value="UniProtKB-SubCell"/>
</dbReference>
<dbReference type="GO" id="GO:0030154">
    <property type="term" value="P:cell differentiation"/>
    <property type="evidence" value="ECO:0007669"/>
    <property type="project" value="UniProtKB-KW"/>
</dbReference>
<dbReference type="GO" id="GO:0010467">
    <property type="term" value="P:gene expression"/>
    <property type="evidence" value="ECO:0007669"/>
    <property type="project" value="Ensembl"/>
</dbReference>
<dbReference type="GO" id="GO:0000723">
    <property type="term" value="P:telomere maintenance"/>
    <property type="evidence" value="ECO:0007669"/>
    <property type="project" value="Ensembl"/>
</dbReference>
<dbReference type="Gene3D" id="3.80.10.10">
    <property type="entry name" value="Ribonuclease Inhibitor"/>
    <property type="match status" value="2"/>
</dbReference>
<dbReference type="InterPro" id="IPR001611">
    <property type="entry name" value="Leu-rich_rpt"/>
</dbReference>
<dbReference type="InterPro" id="IPR052201">
    <property type="entry name" value="LRR-containing_regulator"/>
</dbReference>
<dbReference type="InterPro" id="IPR032675">
    <property type="entry name" value="LRR_dom_sf"/>
</dbReference>
<dbReference type="PANTHER" id="PTHR24111">
    <property type="entry name" value="LEUCINE-RICH REPEAT-CONTAINING PROTEIN 34"/>
    <property type="match status" value="1"/>
</dbReference>
<dbReference type="PANTHER" id="PTHR24111:SF4">
    <property type="entry name" value="LEUCINE-RICH REPEAT-CONTAINING PROTEIN 34"/>
    <property type="match status" value="1"/>
</dbReference>
<dbReference type="Pfam" id="PF13516">
    <property type="entry name" value="LRR_6"/>
    <property type="match status" value="6"/>
</dbReference>
<dbReference type="SMART" id="SM00368">
    <property type="entry name" value="LRR_RI"/>
    <property type="match status" value="7"/>
</dbReference>
<dbReference type="SUPFAM" id="SSF52047">
    <property type="entry name" value="RNI-like"/>
    <property type="match status" value="1"/>
</dbReference>
<sequence>MAAQPPRPVGERSMGSSREAARAPARSPAWASTQASTPGAALAVQRESPESGLQKHYSNLCMEKSQKINPFILHILQEVDEEIKKGLAAGITLNIAGNNRLVPVERVTGEDFWILSKILKNCLYINGLDVGYNLLCDVGAYYAAKLLQKQLNLIYLNLMFNDIGPEGGELIAKVLHKNRTLKYLRMTGNKIENKGGMFFAAMLQINSSLEKLDLGDCDLGMQSVIAFATVLTQNQAIKAINLNRPILYSEQEESTVHVGRMLKENHCLVALHMCKHDIKNSGIQQLCDALYLNSSLRYLDVSCNKITHDGMVYLADVLKSNTTLEVIDLSFNRIENAGANYLSETLTSHNRSLKALSVVSNNIEGEGLVALSQSMKTNLTFSHIYIWGNKFDEATCIAYSDLIQMGCLKPDNTDVEPFVVDGRVYLAEVSNGLKKHYYWTSTYGESYDHSSNAGFALVPVGQQP</sequence>
<feature type="chain" id="PRO_0000228669" description="Leucine-rich repeat-containing protein 34">
    <location>
        <begin position="1"/>
        <end position="464"/>
    </location>
</feature>
<feature type="repeat" description="LRR 1">
    <location>
        <begin position="295"/>
        <end position="315"/>
    </location>
</feature>
<feature type="repeat" description="LRR 2">
    <location>
        <begin position="323"/>
        <end position="345"/>
    </location>
</feature>
<feature type="region of interest" description="Disordered" evidence="2">
    <location>
        <begin position="1"/>
        <end position="48"/>
    </location>
</feature>
<feature type="compositionally biased region" description="Low complexity" evidence="2">
    <location>
        <begin position="16"/>
        <end position="32"/>
    </location>
</feature>
<feature type="splice variant" id="VSP_059511" description="In isoform 2." evidence="3">
    <location>
        <begin position="220"/>
        <end position="251"/>
    </location>
</feature>
<feature type="sequence variant" id="VAR_051115" description="In dbSNP:rs9820986.">
    <original>P</original>
    <variation>L</variation>
    <location>
        <position position="49"/>
    </location>
</feature>
<feature type="sequence variant" id="VAR_034086" description="In dbSNP:rs10936600.">
    <original>L</original>
    <variation>I</variation>
    <location>
        <position position="286"/>
    </location>
</feature>
<feature type="sequence variant" id="VAR_051116" description="In dbSNP:rs9872760.">
    <original>M</original>
    <variation>I</variation>
    <location>
        <position position="405"/>
    </location>
</feature>
<feature type="sequence conflict" description="In Ref. 1; BAG57108." evidence="4" ref="1">
    <original>E</original>
    <variation>G</variation>
    <location>
        <position position="82"/>
    </location>
</feature>
<feature type="sequence conflict" description="In Ref. 4; AAH32841." evidence="4" ref="4">
    <original>A</original>
    <variation>T</variation>
    <location>
        <position position="398"/>
    </location>
</feature>
<proteinExistence type="evidence at protein level"/>
<gene>
    <name type="primary">LRRC34</name>
</gene>
<protein>
    <recommendedName>
        <fullName>Leucine-rich repeat-containing protein 34</fullName>
    </recommendedName>
</protein>
<comment type="function">
    <text evidence="1">Highly expressed in stem cells where it may be involved in regulation of pluripotency. In embryonic stem cells (ESCs), important for normal expression of the pluripotency regulators POU5F1/OCT4 and KLF4. Also important for expression of the ectodermal marker gene NES and the endodermal marker gene GATA4. Promotes stem cell proliferation in vitro.</text>
</comment>
<comment type="subunit">
    <text evidence="1">Interacts with NPM1 and NCL.</text>
</comment>
<comment type="subcellular location">
    <subcellularLocation>
        <location evidence="1">Nucleus</location>
    </subcellularLocation>
    <subcellularLocation>
        <location evidence="1">Nucleus</location>
        <location evidence="1">Nucleolus</location>
    </subcellularLocation>
    <subcellularLocation>
        <location evidence="1">Cytoplasm</location>
    </subcellularLocation>
    <text evidence="1">As stem cells differentiate, translocates from the nucleolus to the nucleus and then to the cytoplasm. Colocalizes with NPM1 and NCL in the nucleolus.</text>
</comment>
<comment type="alternative products">
    <event type="alternative splicing"/>
    <isoform>
        <id>Q8IZ02-2</id>
        <name>1</name>
        <sequence type="displayed"/>
    </isoform>
    <isoform>
        <id>Q8IZ02-3</id>
        <name>2</name>
        <sequence type="described" ref="VSP_059511"/>
    </isoform>
</comment>
<comment type="caution">
    <text evidence="4">It is uncertain whether Met-1 or Met-14 is the initiator.</text>
</comment>
<comment type="sequence caution" evidence="4">
    <conflict type="erroneous initiation">
        <sequence resource="EMBL-CDS" id="AAH32841"/>
    </conflict>
    <text>Truncated N-terminus.</text>
</comment>